<evidence type="ECO:0000255" key="1">
    <source>
        <dbReference type="HAMAP-Rule" id="MF_01326"/>
    </source>
</evidence>
<evidence type="ECO:0000305" key="2"/>
<dbReference type="EMBL" id="AP009484">
    <property type="protein sequence ID" value="BAH16913.1"/>
    <property type="molecule type" value="Genomic_DNA"/>
</dbReference>
<dbReference type="RefSeq" id="WP_012656117.1">
    <property type="nucleotide sequence ID" value="NC_011999.1"/>
</dbReference>
<dbReference type="SMR" id="B9E9K2"/>
<dbReference type="STRING" id="458233.MCCL_0206"/>
<dbReference type="GeneID" id="35294481"/>
<dbReference type="GeneID" id="61130628"/>
<dbReference type="KEGG" id="mcl:MCCL_0206"/>
<dbReference type="eggNOG" id="COG0198">
    <property type="taxonomic scope" value="Bacteria"/>
</dbReference>
<dbReference type="HOGENOM" id="CLU_093315_2_0_9"/>
<dbReference type="OrthoDB" id="9807419at2"/>
<dbReference type="Proteomes" id="UP000001383">
    <property type="component" value="Chromosome"/>
</dbReference>
<dbReference type="GO" id="GO:1990904">
    <property type="term" value="C:ribonucleoprotein complex"/>
    <property type="evidence" value="ECO:0007669"/>
    <property type="project" value="UniProtKB-KW"/>
</dbReference>
<dbReference type="GO" id="GO:0005840">
    <property type="term" value="C:ribosome"/>
    <property type="evidence" value="ECO:0007669"/>
    <property type="project" value="UniProtKB-KW"/>
</dbReference>
<dbReference type="GO" id="GO:0019843">
    <property type="term" value="F:rRNA binding"/>
    <property type="evidence" value="ECO:0007669"/>
    <property type="project" value="UniProtKB-UniRule"/>
</dbReference>
<dbReference type="GO" id="GO:0003735">
    <property type="term" value="F:structural constituent of ribosome"/>
    <property type="evidence" value="ECO:0007669"/>
    <property type="project" value="InterPro"/>
</dbReference>
<dbReference type="GO" id="GO:0006412">
    <property type="term" value="P:translation"/>
    <property type="evidence" value="ECO:0007669"/>
    <property type="project" value="UniProtKB-UniRule"/>
</dbReference>
<dbReference type="CDD" id="cd06089">
    <property type="entry name" value="KOW_RPL26"/>
    <property type="match status" value="1"/>
</dbReference>
<dbReference type="FunFam" id="2.30.30.30:FF:000004">
    <property type="entry name" value="50S ribosomal protein L24"/>
    <property type="match status" value="1"/>
</dbReference>
<dbReference type="Gene3D" id="2.30.30.30">
    <property type="match status" value="1"/>
</dbReference>
<dbReference type="HAMAP" id="MF_01326_B">
    <property type="entry name" value="Ribosomal_uL24_B"/>
    <property type="match status" value="1"/>
</dbReference>
<dbReference type="InterPro" id="IPR005824">
    <property type="entry name" value="KOW"/>
</dbReference>
<dbReference type="InterPro" id="IPR014722">
    <property type="entry name" value="Rib_uL2_dom2"/>
</dbReference>
<dbReference type="InterPro" id="IPR003256">
    <property type="entry name" value="Ribosomal_uL24"/>
</dbReference>
<dbReference type="InterPro" id="IPR005825">
    <property type="entry name" value="Ribosomal_uL24_CS"/>
</dbReference>
<dbReference type="InterPro" id="IPR041988">
    <property type="entry name" value="Ribosomal_uL24_KOW"/>
</dbReference>
<dbReference type="InterPro" id="IPR008991">
    <property type="entry name" value="Translation_prot_SH3-like_sf"/>
</dbReference>
<dbReference type="NCBIfam" id="TIGR01079">
    <property type="entry name" value="rplX_bact"/>
    <property type="match status" value="1"/>
</dbReference>
<dbReference type="PANTHER" id="PTHR12903">
    <property type="entry name" value="MITOCHONDRIAL RIBOSOMAL PROTEIN L24"/>
    <property type="match status" value="1"/>
</dbReference>
<dbReference type="Pfam" id="PF00467">
    <property type="entry name" value="KOW"/>
    <property type="match status" value="1"/>
</dbReference>
<dbReference type="Pfam" id="PF17136">
    <property type="entry name" value="ribosomal_L24"/>
    <property type="match status" value="1"/>
</dbReference>
<dbReference type="SMART" id="SM00739">
    <property type="entry name" value="KOW"/>
    <property type="match status" value="1"/>
</dbReference>
<dbReference type="SUPFAM" id="SSF50104">
    <property type="entry name" value="Translation proteins SH3-like domain"/>
    <property type="match status" value="1"/>
</dbReference>
<dbReference type="PROSITE" id="PS01108">
    <property type="entry name" value="RIBOSOMAL_L24"/>
    <property type="match status" value="1"/>
</dbReference>
<proteinExistence type="inferred from homology"/>
<accession>B9E9K2</accession>
<name>RL24_MACCJ</name>
<keyword id="KW-1185">Reference proteome</keyword>
<keyword id="KW-0687">Ribonucleoprotein</keyword>
<keyword id="KW-0689">Ribosomal protein</keyword>
<keyword id="KW-0694">RNA-binding</keyword>
<keyword id="KW-0699">rRNA-binding</keyword>
<feature type="chain" id="PRO_1000165951" description="Large ribosomal subunit protein uL24">
    <location>
        <begin position="1"/>
        <end position="102"/>
    </location>
</feature>
<gene>
    <name evidence="1" type="primary">rplX</name>
    <name type="ordered locus">MCCL_0206</name>
</gene>
<organism>
    <name type="scientific">Macrococcus caseolyticus (strain JCSC5402)</name>
    <name type="common">Macrococcoides caseolyticum</name>
    <dbReference type="NCBI Taxonomy" id="458233"/>
    <lineage>
        <taxon>Bacteria</taxon>
        <taxon>Bacillati</taxon>
        <taxon>Bacillota</taxon>
        <taxon>Bacilli</taxon>
        <taxon>Bacillales</taxon>
        <taxon>Staphylococcaceae</taxon>
        <taxon>Macrococcoides</taxon>
    </lineage>
</organism>
<reference key="1">
    <citation type="journal article" date="2009" name="J. Bacteriol.">
        <title>Complete genome sequence of Macrococcus caseolyticus strain JCSCS5402, reflecting the ancestral genome of the human-pathogenic staphylococci.</title>
        <authorList>
            <person name="Baba T."/>
            <person name="Kuwahara-Arai K."/>
            <person name="Uchiyama I."/>
            <person name="Takeuchi F."/>
            <person name="Ito T."/>
            <person name="Hiramatsu K."/>
        </authorList>
    </citation>
    <scope>NUCLEOTIDE SEQUENCE [LARGE SCALE GENOMIC DNA]</scope>
    <source>
        <strain>JCSC5402</strain>
    </source>
</reference>
<protein>
    <recommendedName>
        <fullName evidence="1">Large ribosomal subunit protein uL24</fullName>
    </recommendedName>
    <alternativeName>
        <fullName evidence="2">50S ribosomal protein L24</fullName>
    </alternativeName>
</protein>
<comment type="function">
    <text evidence="1">One of two assembly initiator proteins, it binds directly to the 5'-end of the 23S rRNA, where it nucleates assembly of the 50S subunit.</text>
</comment>
<comment type="function">
    <text evidence="1">One of the proteins that surrounds the polypeptide exit tunnel on the outside of the subunit.</text>
</comment>
<comment type="subunit">
    <text evidence="1">Part of the 50S ribosomal subunit.</text>
</comment>
<comment type="similarity">
    <text evidence="1">Belongs to the universal ribosomal protein uL24 family.</text>
</comment>
<sequence>MHIKKGDKVIVITGKDKGKTGTVIEALPKRDRVVVEGVNIVKKHQKPTQMNPEGGITEFEAAIHVSNVMLLDPKTNKPTRVGTKIEDGKKVRVAKKSGEIIK</sequence>